<dbReference type="EC" id="7.2.1.1" evidence="1"/>
<dbReference type="EMBL" id="CP000305">
    <property type="protein sequence ID" value="ABG17192.1"/>
    <property type="molecule type" value="Genomic_DNA"/>
</dbReference>
<dbReference type="EMBL" id="ACNQ01000008">
    <property type="protein sequence ID" value="EEO77270.1"/>
    <property type="molecule type" value="Genomic_DNA"/>
</dbReference>
<dbReference type="RefSeq" id="WP_002208711.1">
    <property type="nucleotide sequence ID" value="NZ_ACNQ01000008.1"/>
</dbReference>
<dbReference type="SMR" id="Q1CLD8"/>
<dbReference type="GeneID" id="57975484"/>
<dbReference type="KEGG" id="ypn:YPN_0860"/>
<dbReference type="HOGENOM" id="CLU_003827_7_2_6"/>
<dbReference type="Proteomes" id="UP000008936">
    <property type="component" value="Chromosome"/>
</dbReference>
<dbReference type="GO" id="GO:0005886">
    <property type="term" value="C:plasma membrane"/>
    <property type="evidence" value="ECO:0007669"/>
    <property type="project" value="UniProtKB-SubCell"/>
</dbReference>
<dbReference type="GO" id="GO:0051537">
    <property type="term" value="F:2 iron, 2 sulfur cluster binding"/>
    <property type="evidence" value="ECO:0007669"/>
    <property type="project" value="UniProtKB-KW"/>
</dbReference>
<dbReference type="GO" id="GO:0009055">
    <property type="term" value="F:electron transfer activity"/>
    <property type="evidence" value="ECO:0007669"/>
    <property type="project" value="UniProtKB-UniRule"/>
</dbReference>
<dbReference type="GO" id="GO:0046872">
    <property type="term" value="F:metal ion binding"/>
    <property type="evidence" value="ECO:0007669"/>
    <property type="project" value="UniProtKB-KW"/>
</dbReference>
<dbReference type="GO" id="GO:0016655">
    <property type="term" value="F:oxidoreductase activity, acting on NAD(P)H, quinone or similar compound as acceptor"/>
    <property type="evidence" value="ECO:0007669"/>
    <property type="project" value="InterPro"/>
</dbReference>
<dbReference type="GO" id="GO:0006814">
    <property type="term" value="P:sodium ion transport"/>
    <property type="evidence" value="ECO:0007669"/>
    <property type="project" value="UniProtKB-UniRule"/>
</dbReference>
<dbReference type="CDD" id="cd06188">
    <property type="entry name" value="NADH_quinone_reductase"/>
    <property type="match status" value="1"/>
</dbReference>
<dbReference type="FunFam" id="3.40.50.80:FF:000014">
    <property type="entry name" value="Na(+)-translocating NADH-quinone reductase subunit F"/>
    <property type="match status" value="1"/>
</dbReference>
<dbReference type="Gene3D" id="3.10.20.30">
    <property type="match status" value="1"/>
</dbReference>
<dbReference type="Gene3D" id="3.40.50.80">
    <property type="entry name" value="Nucleotide-binding domain of ferredoxin-NADP reductase (FNR) module"/>
    <property type="match status" value="1"/>
</dbReference>
<dbReference type="Gene3D" id="2.40.30.10">
    <property type="entry name" value="Translation factors"/>
    <property type="match status" value="1"/>
</dbReference>
<dbReference type="HAMAP" id="MF_00430">
    <property type="entry name" value="NqrF"/>
    <property type="match status" value="1"/>
</dbReference>
<dbReference type="InterPro" id="IPR036010">
    <property type="entry name" value="2Fe-2S_ferredoxin-like_sf"/>
</dbReference>
<dbReference type="InterPro" id="IPR001041">
    <property type="entry name" value="2Fe-2S_ferredoxin-type"/>
</dbReference>
<dbReference type="InterPro" id="IPR012675">
    <property type="entry name" value="Beta-grasp_dom_sf"/>
</dbReference>
<dbReference type="InterPro" id="IPR008333">
    <property type="entry name" value="Cbr1-like_FAD-bd_dom"/>
</dbReference>
<dbReference type="InterPro" id="IPR017927">
    <property type="entry name" value="FAD-bd_FR_type"/>
</dbReference>
<dbReference type="InterPro" id="IPR001709">
    <property type="entry name" value="Flavoprot_Pyr_Nucl_cyt_Rdtase"/>
</dbReference>
<dbReference type="InterPro" id="IPR039261">
    <property type="entry name" value="FNR_nucleotide-bd"/>
</dbReference>
<dbReference type="InterPro" id="IPR010205">
    <property type="entry name" value="NqrF"/>
</dbReference>
<dbReference type="InterPro" id="IPR001433">
    <property type="entry name" value="OxRdtase_FAD/NAD-bd"/>
</dbReference>
<dbReference type="InterPro" id="IPR017938">
    <property type="entry name" value="Riboflavin_synthase-like_b-brl"/>
</dbReference>
<dbReference type="NCBIfam" id="TIGR01941">
    <property type="entry name" value="nqrF"/>
    <property type="match status" value="1"/>
</dbReference>
<dbReference type="PANTHER" id="PTHR43644">
    <property type="entry name" value="NA(+)-TRANSLOCATING NADH-QUINONE REDUCTASE SUBUNIT"/>
    <property type="match status" value="1"/>
</dbReference>
<dbReference type="PANTHER" id="PTHR43644:SF1">
    <property type="entry name" value="NAD(P)H-FLAVIN REDUCTASE"/>
    <property type="match status" value="1"/>
</dbReference>
<dbReference type="Pfam" id="PF00970">
    <property type="entry name" value="FAD_binding_6"/>
    <property type="match status" value="1"/>
</dbReference>
<dbReference type="Pfam" id="PF00111">
    <property type="entry name" value="Fer2"/>
    <property type="match status" value="1"/>
</dbReference>
<dbReference type="Pfam" id="PF00175">
    <property type="entry name" value="NAD_binding_1"/>
    <property type="match status" value="1"/>
</dbReference>
<dbReference type="PIRSF" id="PIRSF000044">
    <property type="entry name" value="Cis_Diol_DH_RD"/>
    <property type="match status" value="1"/>
</dbReference>
<dbReference type="PRINTS" id="PR00371">
    <property type="entry name" value="FPNCR"/>
</dbReference>
<dbReference type="SUPFAM" id="SSF54292">
    <property type="entry name" value="2Fe-2S ferredoxin-like"/>
    <property type="match status" value="1"/>
</dbReference>
<dbReference type="SUPFAM" id="SSF52343">
    <property type="entry name" value="Ferredoxin reductase-like, C-terminal NADP-linked domain"/>
    <property type="match status" value="1"/>
</dbReference>
<dbReference type="SUPFAM" id="SSF63380">
    <property type="entry name" value="Riboflavin synthase domain-like"/>
    <property type="match status" value="1"/>
</dbReference>
<dbReference type="PROSITE" id="PS51085">
    <property type="entry name" value="2FE2S_FER_2"/>
    <property type="match status" value="1"/>
</dbReference>
<dbReference type="PROSITE" id="PS51384">
    <property type="entry name" value="FAD_FR"/>
    <property type="match status" value="1"/>
</dbReference>
<keyword id="KW-0001">2Fe-2S</keyword>
<keyword id="KW-0997">Cell inner membrane</keyword>
<keyword id="KW-1003">Cell membrane</keyword>
<keyword id="KW-0274">FAD</keyword>
<keyword id="KW-0285">Flavoprotein</keyword>
<keyword id="KW-0406">Ion transport</keyword>
<keyword id="KW-0408">Iron</keyword>
<keyword id="KW-0411">Iron-sulfur</keyword>
<keyword id="KW-0472">Membrane</keyword>
<keyword id="KW-0479">Metal-binding</keyword>
<keyword id="KW-0520">NAD</keyword>
<keyword id="KW-0915">Sodium</keyword>
<keyword id="KW-0739">Sodium transport</keyword>
<keyword id="KW-1278">Translocase</keyword>
<keyword id="KW-0812">Transmembrane</keyword>
<keyword id="KW-1133">Transmembrane helix</keyword>
<keyword id="KW-0813">Transport</keyword>
<keyword id="KW-0830">Ubiquinone</keyword>
<evidence type="ECO:0000255" key="1">
    <source>
        <dbReference type="HAMAP-Rule" id="MF_00430"/>
    </source>
</evidence>
<accession>Q1CLD8</accession>
<accession>C4GQC9</accession>
<organism>
    <name type="scientific">Yersinia pestis bv. Antiqua (strain Nepal516)</name>
    <dbReference type="NCBI Taxonomy" id="377628"/>
    <lineage>
        <taxon>Bacteria</taxon>
        <taxon>Pseudomonadati</taxon>
        <taxon>Pseudomonadota</taxon>
        <taxon>Gammaproteobacteria</taxon>
        <taxon>Enterobacterales</taxon>
        <taxon>Yersiniaceae</taxon>
        <taxon>Yersinia</taxon>
    </lineage>
</organism>
<proteinExistence type="inferred from homology"/>
<sequence>MEIILGVVMFTLIVLALTVMILFAKSKLVNTGDITVEINEDEDKSFTAPAGDKLLNMLSSHGIFVSSACGGGGSCGQCRVTIKEGGGDILPTELSHISKREAKEGCRLACQVNVKQNLKIELPEEIFGVKKWTCEVISNDNKATFIKELKLKIPDGDVVPFRAGGFIQIEAEPHTVKYADFDVPTEYRGDWDKFNLFRFESVVTEPTVRAYSMANYPEEHGIILLNVRIATPPPSVPDAPPGIMSSYIWSLKPGDKVVISGPFGEFFAKDTDAEMVFIGGGAGMAPMRSHIFDQLKRLHSKRKISFWYGARSRREMFYEEDFDQLQAENDNFRWHVALSDPQPEDNWTGYTGFIHNVLLENYLKDHPAPEDCEFYMCGPPMMNAAVIKMLKDLGVEDENIMLDDFGG</sequence>
<comment type="function">
    <text evidence="1">NQR complex catalyzes the reduction of ubiquinone-1 to ubiquinol by two successive reactions, coupled with the transport of Na(+) ions from the cytoplasm to the periplasm. The first step is catalyzed by NqrF, which accepts electrons from NADH and reduces ubiquinone-1 to ubisemiquinone by a one-electron transfer pathway.</text>
</comment>
<comment type="catalytic activity">
    <reaction evidence="1">
        <text>a ubiquinone + n Na(+)(in) + NADH + H(+) = a ubiquinol + n Na(+)(out) + NAD(+)</text>
        <dbReference type="Rhea" id="RHEA:47748"/>
        <dbReference type="Rhea" id="RHEA-COMP:9565"/>
        <dbReference type="Rhea" id="RHEA-COMP:9566"/>
        <dbReference type="ChEBI" id="CHEBI:15378"/>
        <dbReference type="ChEBI" id="CHEBI:16389"/>
        <dbReference type="ChEBI" id="CHEBI:17976"/>
        <dbReference type="ChEBI" id="CHEBI:29101"/>
        <dbReference type="ChEBI" id="CHEBI:57540"/>
        <dbReference type="ChEBI" id="CHEBI:57945"/>
        <dbReference type="EC" id="7.2.1.1"/>
    </reaction>
</comment>
<comment type="cofactor">
    <cofactor evidence="1">
        <name>[2Fe-2S] cluster</name>
        <dbReference type="ChEBI" id="CHEBI:190135"/>
    </cofactor>
    <text evidence="1">Binds 1 [2Fe-2S] cluster.</text>
</comment>
<comment type="cofactor">
    <cofactor evidence="1">
        <name>FAD</name>
        <dbReference type="ChEBI" id="CHEBI:57692"/>
    </cofactor>
</comment>
<comment type="subunit">
    <text evidence="1">Composed of six subunits; NqrA, NqrB, NqrC, NqrD, NqrE and NqrF.</text>
</comment>
<comment type="subcellular location">
    <subcellularLocation>
        <location evidence="1">Cell inner membrane</location>
        <topology evidence="1">Single-pass membrane protein</topology>
    </subcellularLocation>
</comment>
<comment type="similarity">
    <text evidence="1">Belongs to the NqrF family.</text>
</comment>
<gene>
    <name evidence="1" type="primary">nqrF</name>
    <name type="ordered locus">YPN_0860</name>
    <name type="ORF">YP516_0929</name>
</gene>
<name>NQRF_YERPN</name>
<reference key="1">
    <citation type="journal article" date="2006" name="J. Bacteriol.">
        <title>Complete genome sequence of Yersinia pestis strains Antiqua and Nepal516: evidence of gene reduction in an emerging pathogen.</title>
        <authorList>
            <person name="Chain P.S.G."/>
            <person name="Hu P."/>
            <person name="Malfatti S.A."/>
            <person name="Radnedge L."/>
            <person name="Larimer F."/>
            <person name="Vergez L.M."/>
            <person name="Worsham P."/>
            <person name="Chu M.C."/>
            <person name="Andersen G.L."/>
        </authorList>
    </citation>
    <scope>NUCLEOTIDE SEQUENCE [LARGE SCALE GENOMIC DNA]</scope>
    <source>
        <strain>Nepal516</strain>
    </source>
</reference>
<reference key="2">
    <citation type="submission" date="2009-04" db="EMBL/GenBank/DDBJ databases">
        <title>Yersinia pestis Nepal516A whole genome shotgun sequencing project.</title>
        <authorList>
            <person name="Plunkett G. III"/>
            <person name="Anderson B.D."/>
            <person name="Baumler D.J."/>
            <person name="Burland V."/>
            <person name="Cabot E.L."/>
            <person name="Glasner J.D."/>
            <person name="Mau B."/>
            <person name="Neeno-Eckwall E."/>
            <person name="Perna N.T."/>
            <person name="Munk A.C."/>
            <person name="Tapia R."/>
            <person name="Green L.D."/>
            <person name="Rogers Y.C."/>
            <person name="Detter J.C."/>
            <person name="Bruce D.C."/>
            <person name="Brettin T.S."/>
        </authorList>
    </citation>
    <scope>NUCLEOTIDE SEQUENCE [LARGE SCALE GENOMIC DNA]</scope>
    <source>
        <strain>Nepal516</strain>
    </source>
</reference>
<protein>
    <recommendedName>
        <fullName evidence="1">Na(+)-translocating NADH-quinone reductase subunit F</fullName>
        <shortName evidence="1">Na(+)-NQR subunit F</shortName>
        <shortName evidence="1">Na(+)-translocating NQR subunit F</shortName>
        <ecNumber evidence="1">7.2.1.1</ecNumber>
    </recommendedName>
    <alternativeName>
        <fullName evidence="1">NQR complex subunit F</fullName>
    </alternativeName>
    <alternativeName>
        <fullName evidence="1">NQR-1 subunit F</fullName>
    </alternativeName>
</protein>
<feature type="chain" id="PRO_1000080599" description="Na(+)-translocating NADH-quinone reductase subunit F">
    <location>
        <begin position="1"/>
        <end position="407"/>
    </location>
</feature>
<feature type="transmembrane region" description="Helical" evidence="1">
    <location>
        <begin position="3"/>
        <end position="23"/>
    </location>
</feature>
<feature type="domain" description="2Fe-2S ferredoxin-type" evidence="1">
    <location>
        <begin position="32"/>
        <end position="126"/>
    </location>
</feature>
<feature type="domain" description="FAD-binding FR-type" evidence="1">
    <location>
        <begin position="129"/>
        <end position="269"/>
    </location>
</feature>
<feature type="binding site" evidence="1">
    <location>
        <position position="69"/>
    </location>
    <ligand>
        <name>[2Fe-2S] cluster</name>
        <dbReference type="ChEBI" id="CHEBI:190135"/>
    </ligand>
</feature>
<feature type="binding site" evidence="1">
    <location>
        <position position="75"/>
    </location>
    <ligand>
        <name>[2Fe-2S] cluster</name>
        <dbReference type="ChEBI" id="CHEBI:190135"/>
    </ligand>
</feature>
<feature type="binding site" evidence="1">
    <location>
        <position position="78"/>
    </location>
    <ligand>
        <name>[2Fe-2S] cluster</name>
        <dbReference type="ChEBI" id="CHEBI:190135"/>
    </ligand>
</feature>
<feature type="binding site" evidence="1">
    <location>
        <position position="110"/>
    </location>
    <ligand>
        <name>[2Fe-2S] cluster</name>
        <dbReference type="ChEBI" id="CHEBI:190135"/>
    </ligand>
</feature>